<name>RS2_RHOP2</name>
<sequence length="331" mass="35929">MALPEFTMRQLLEAGVHFGHQSHRWNPKMAEYIFGARNNIHIIDLAQTVPLMHRALQAISDTVAKGGRVLFVGTKRQAQDAVADAAKRSAQYFVNSRWLGGTLTNWKTISGSIKRLRHLDDVLNSGDASAYTKKERLTLQRERDKLDRSLGGIKDMGGLPDLIFVIDTNKEDIAIQEAQRLGIPVAAIVDTNCDPKGITYLVPGNDDAGRAISLYCDLIARAVIDGISRAQGESGIDIGASSRPPREDLPAAQATGFQGLSGPRGTPDDLKKLAGVSGDIEKKFNDLGIFHYWQLAELNADTAHQIGEEVGLPGRVDGWVAQAKGLTAEAE</sequence>
<reference key="1">
    <citation type="submission" date="2006-01" db="EMBL/GenBank/DDBJ databases">
        <title>Complete sequence of Rhodopseudomonas palustris HaA2.</title>
        <authorList>
            <consortium name="US DOE Joint Genome Institute"/>
            <person name="Copeland A."/>
            <person name="Lucas S."/>
            <person name="Lapidus A."/>
            <person name="Barry K."/>
            <person name="Detter J.C."/>
            <person name="Glavina T."/>
            <person name="Hammon N."/>
            <person name="Israni S."/>
            <person name="Pitluck S."/>
            <person name="Chain P."/>
            <person name="Malfatti S."/>
            <person name="Shin M."/>
            <person name="Vergez L."/>
            <person name="Schmutz J."/>
            <person name="Larimer F."/>
            <person name="Land M."/>
            <person name="Hauser L."/>
            <person name="Pelletier D.A."/>
            <person name="Kyrpides N."/>
            <person name="Anderson I."/>
            <person name="Oda Y."/>
            <person name="Harwood C.S."/>
            <person name="Richardson P."/>
        </authorList>
    </citation>
    <scope>NUCLEOTIDE SEQUENCE [LARGE SCALE GENOMIC DNA]</scope>
    <source>
        <strain>HaA2</strain>
    </source>
</reference>
<keyword id="KW-1185">Reference proteome</keyword>
<keyword id="KW-0687">Ribonucleoprotein</keyword>
<keyword id="KW-0689">Ribosomal protein</keyword>
<feature type="chain" id="PRO_1000004046" description="Small ribosomal subunit protein uS2">
    <location>
        <begin position="1"/>
        <end position="331"/>
    </location>
</feature>
<accession>Q2IW80</accession>
<evidence type="ECO:0000255" key="1">
    <source>
        <dbReference type="HAMAP-Rule" id="MF_00291"/>
    </source>
</evidence>
<evidence type="ECO:0000305" key="2"/>
<proteinExistence type="inferred from homology"/>
<comment type="similarity">
    <text evidence="1">Belongs to the universal ribosomal protein uS2 family.</text>
</comment>
<organism>
    <name type="scientific">Rhodopseudomonas palustris (strain HaA2)</name>
    <dbReference type="NCBI Taxonomy" id="316058"/>
    <lineage>
        <taxon>Bacteria</taxon>
        <taxon>Pseudomonadati</taxon>
        <taxon>Pseudomonadota</taxon>
        <taxon>Alphaproteobacteria</taxon>
        <taxon>Hyphomicrobiales</taxon>
        <taxon>Nitrobacteraceae</taxon>
        <taxon>Rhodopseudomonas</taxon>
    </lineage>
</organism>
<protein>
    <recommendedName>
        <fullName evidence="1">Small ribosomal subunit protein uS2</fullName>
    </recommendedName>
    <alternativeName>
        <fullName evidence="2">30S ribosomal protein S2</fullName>
    </alternativeName>
</protein>
<gene>
    <name evidence="1" type="primary">rpsB</name>
    <name type="ordered locus">RPB_2828</name>
</gene>
<dbReference type="EMBL" id="CP000250">
    <property type="protein sequence ID" value="ABD07530.1"/>
    <property type="molecule type" value="Genomic_DNA"/>
</dbReference>
<dbReference type="RefSeq" id="WP_011441715.1">
    <property type="nucleotide sequence ID" value="NC_007778.1"/>
</dbReference>
<dbReference type="SMR" id="Q2IW80"/>
<dbReference type="STRING" id="316058.RPB_2828"/>
<dbReference type="KEGG" id="rpb:RPB_2828"/>
<dbReference type="eggNOG" id="COG0052">
    <property type="taxonomic scope" value="Bacteria"/>
</dbReference>
<dbReference type="HOGENOM" id="CLU_040318_2_1_5"/>
<dbReference type="OrthoDB" id="9808036at2"/>
<dbReference type="Proteomes" id="UP000008809">
    <property type="component" value="Chromosome"/>
</dbReference>
<dbReference type="GO" id="GO:0022627">
    <property type="term" value="C:cytosolic small ribosomal subunit"/>
    <property type="evidence" value="ECO:0007669"/>
    <property type="project" value="TreeGrafter"/>
</dbReference>
<dbReference type="GO" id="GO:0003735">
    <property type="term" value="F:structural constituent of ribosome"/>
    <property type="evidence" value="ECO:0007669"/>
    <property type="project" value="InterPro"/>
</dbReference>
<dbReference type="GO" id="GO:0006412">
    <property type="term" value="P:translation"/>
    <property type="evidence" value="ECO:0007669"/>
    <property type="project" value="UniProtKB-UniRule"/>
</dbReference>
<dbReference type="CDD" id="cd01425">
    <property type="entry name" value="RPS2"/>
    <property type="match status" value="1"/>
</dbReference>
<dbReference type="FunFam" id="1.10.287.610:FF:000001">
    <property type="entry name" value="30S ribosomal protein S2"/>
    <property type="match status" value="1"/>
</dbReference>
<dbReference type="Gene3D" id="3.40.50.10490">
    <property type="entry name" value="Glucose-6-phosphate isomerase like protein, domain 1"/>
    <property type="match status" value="1"/>
</dbReference>
<dbReference type="Gene3D" id="1.10.287.610">
    <property type="entry name" value="Helix hairpin bin"/>
    <property type="match status" value="1"/>
</dbReference>
<dbReference type="HAMAP" id="MF_00291_B">
    <property type="entry name" value="Ribosomal_uS2_B"/>
    <property type="match status" value="1"/>
</dbReference>
<dbReference type="InterPro" id="IPR001865">
    <property type="entry name" value="Ribosomal_uS2"/>
</dbReference>
<dbReference type="InterPro" id="IPR005706">
    <property type="entry name" value="Ribosomal_uS2_bac/mit/plastid"/>
</dbReference>
<dbReference type="InterPro" id="IPR018130">
    <property type="entry name" value="Ribosomal_uS2_CS"/>
</dbReference>
<dbReference type="InterPro" id="IPR023591">
    <property type="entry name" value="Ribosomal_uS2_flav_dom_sf"/>
</dbReference>
<dbReference type="NCBIfam" id="NF008966">
    <property type="entry name" value="PRK12311.1"/>
    <property type="match status" value="1"/>
</dbReference>
<dbReference type="NCBIfam" id="TIGR01011">
    <property type="entry name" value="rpsB_bact"/>
    <property type="match status" value="1"/>
</dbReference>
<dbReference type="PANTHER" id="PTHR12534">
    <property type="entry name" value="30S RIBOSOMAL PROTEIN S2 PROKARYOTIC AND ORGANELLAR"/>
    <property type="match status" value="1"/>
</dbReference>
<dbReference type="PANTHER" id="PTHR12534:SF0">
    <property type="entry name" value="SMALL RIBOSOMAL SUBUNIT PROTEIN US2M"/>
    <property type="match status" value="1"/>
</dbReference>
<dbReference type="Pfam" id="PF00318">
    <property type="entry name" value="Ribosomal_S2"/>
    <property type="match status" value="1"/>
</dbReference>
<dbReference type="PRINTS" id="PR00395">
    <property type="entry name" value="RIBOSOMALS2"/>
</dbReference>
<dbReference type="SUPFAM" id="SSF52313">
    <property type="entry name" value="Ribosomal protein S2"/>
    <property type="match status" value="1"/>
</dbReference>
<dbReference type="PROSITE" id="PS00962">
    <property type="entry name" value="RIBOSOMAL_S2_1"/>
    <property type="match status" value="1"/>
</dbReference>
<dbReference type="PROSITE" id="PS00963">
    <property type="entry name" value="RIBOSOMAL_S2_2"/>
    <property type="match status" value="1"/>
</dbReference>